<keyword id="KW-0030">Aminoacyl-tRNA synthetase</keyword>
<keyword id="KW-0067">ATP-binding</keyword>
<keyword id="KW-0963">Cytoplasm</keyword>
<keyword id="KW-0436">Ligase</keyword>
<keyword id="KW-0547">Nucleotide-binding</keyword>
<keyword id="KW-0648">Protein biosynthesis</keyword>
<keyword id="KW-1185">Reference proteome</keyword>
<gene>
    <name evidence="1" type="primary">glnS</name>
    <name type="ordered locus">YPO2630</name>
    <name type="ordered locus">y1205</name>
    <name type="ordered locus">YP_1084</name>
</gene>
<proteinExistence type="inferred from homology"/>
<sequence length="555" mass="63751">MSEAEARPSNFIRQIIDEDLASGKHTSVHTRFPPEPNGYLHIGHAKSICLNFGIAEDYQGQCNLRFDDTNPVKEDVEFVESIKRDVEWLGFTWSGDVRYSSDYFDQLYQYAVELINKGLAYVDELTPEQMREYRGTLTAPGKNSPYRDRSVEENLALFEKMRAGGFAEGTACLRAKIDMASPFIVMRDPVLYRIKFAEHHQSGNKWCIYPMYDFTHCISDALEGITHSLCTLEFQDNRRLYDWVLDNISIDCHPRQYEFSRLNLEYTIMSKRKLNQLVTEKVVEGWDDPRMPTISGLRRRGYTAASIREFCRRIGVTKQDNNVEMMSLESCIRDDLNEHAPRAMAVLDPIKVVIENRAAGEEWLTMPNHPNNPEMGSRQVPFDSEIYIDRADFREEANKQYKRLVLGKEVRLRNAYVIKAERVEKDAEGNVTTLYCSYDAETLNKDPADGRKVKGVIHWVSVAHALPAEIRLYDRLFNVPNPAAAEDFLSTINPESLVIRQGFVEPSLADAVSDKTYQFEREGYFCADSRYSRPGALVFNRTVGLRDTWAAKATQ</sequence>
<dbReference type="EC" id="6.1.1.18" evidence="1"/>
<dbReference type="EMBL" id="AL590842">
    <property type="protein sequence ID" value="CAL21253.1"/>
    <property type="molecule type" value="Genomic_DNA"/>
</dbReference>
<dbReference type="EMBL" id="AE009952">
    <property type="protein sequence ID" value="AAM84782.1"/>
    <property type="status" value="ALT_INIT"/>
    <property type="molecule type" value="Genomic_DNA"/>
</dbReference>
<dbReference type="EMBL" id="AE017042">
    <property type="protein sequence ID" value="AAS61331.1"/>
    <property type="status" value="ALT_INIT"/>
    <property type="molecule type" value="Genomic_DNA"/>
</dbReference>
<dbReference type="PIR" id="AB0321">
    <property type="entry name" value="AB0321"/>
</dbReference>
<dbReference type="RefSeq" id="WP_002210354.1">
    <property type="nucleotide sequence ID" value="NZ_WUCM01000102.1"/>
</dbReference>
<dbReference type="RefSeq" id="YP_002347586.1">
    <property type="nucleotide sequence ID" value="NC_003143.1"/>
</dbReference>
<dbReference type="SMR" id="Q8ZDD9"/>
<dbReference type="STRING" id="214092.YPO2630"/>
<dbReference type="PaxDb" id="214092-YPO2630"/>
<dbReference type="EnsemblBacteria" id="AAS61331">
    <property type="protein sequence ID" value="AAS61331"/>
    <property type="gene ID" value="YP_1084"/>
</dbReference>
<dbReference type="GeneID" id="57976061"/>
<dbReference type="KEGG" id="ype:YPO2630"/>
<dbReference type="KEGG" id="ypk:y1205"/>
<dbReference type="KEGG" id="ypm:YP_1084"/>
<dbReference type="PATRIC" id="fig|214092.21.peg.3061"/>
<dbReference type="eggNOG" id="COG0008">
    <property type="taxonomic scope" value="Bacteria"/>
</dbReference>
<dbReference type="HOGENOM" id="CLU_001882_2_3_6"/>
<dbReference type="OMA" id="TWCIYPM"/>
<dbReference type="OrthoDB" id="9801560at2"/>
<dbReference type="Proteomes" id="UP000000815">
    <property type="component" value="Chromosome"/>
</dbReference>
<dbReference type="Proteomes" id="UP000001019">
    <property type="component" value="Chromosome"/>
</dbReference>
<dbReference type="Proteomes" id="UP000002490">
    <property type="component" value="Chromosome"/>
</dbReference>
<dbReference type="GO" id="GO:0005829">
    <property type="term" value="C:cytosol"/>
    <property type="evidence" value="ECO:0000318"/>
    <property type="project" value="GO_Central"/>
</dbReference>
<dbReference type="GO" id="GO:0005524">
    <property type="term" value="F:ATP binding"/>
    <property type="evidence" value="ECO:0007669"/>
    <property type="project" value="UniProtKB-UniRule"/>
</dbReference>
<dbReference type="GO" id="GO:0004819">
    <property type="term" value="F:glutamine-tRNA ligase activity"/>
    <property type="evidence" value="ECO:0000318"/>
    <property type="project" value="GO_Central"/>
</dbReference>
<dbReference type="GO" id="GO:0006425">
    <property type="term" value="P:glutaminyl-tRNA aminoacylation"/>
    <property type="evidence" value="ECO:0000318"/>
    <property type="project" value="GO_Central"/>
</dbReference>
<dbReference type="GO" id="GO:0006424">
    <property type="term" value="P:glutamyl-tRNA aminoacylation"/>
    <property type="evidence" value="ECO:0007669"/>
    <property type="project" value="UniProtKB-UniRule"/>
</dbReference>
<dbReference type="CDD" id="cd00807">
    <property type="entry name" value="GlnRS_core"/>
    <property type="match status" value="1"/>
</dbReference>
<dbReference type="FunFam" id="1.10.1160.10:FF:000001">
    <property type="entry name" value="Glutamine--tRNA ligase"/>
    <property type="match status" value="1"/>
</dbReference>
<dbReference type="FunFam" id="2.40.240.10:FF:000001">
    <property type="entry name" value="Glutamine--tRNA ligase"/>
    <property type="match status" value="1"/>
</dbReference>
<dbReference type="FunFam" id="2.40.240.10:FF:000003">
    <property type="entry name" value="Glutamine--tRNA ligase"/>
    <property type="match status" value="1"/>
</dbReference>
<dbReference type="FunFam" id="3.90.800.10:FF:000001">
    <property type="entry name" value="Glutamine--tRNA ligase"/>
    <property type="match status" value="1"/>
</dbReference>
<dbReference type="FunFam" id="3.40.50.620:FF:000037">
    <property type="entry name" value="Glutamine--tRNA ligase cytoplasmic"/>
    <property type="match status" value="1"/>
</dbReference>
<dbReference type="Gene3D" id="1.10.1160.10">
    <property type="entry name" value="Glutamyl-trna Synthetase, Domain 2"/>
    <property type="match status" value="1"/>
</dbReference>
<dbReference type="Gene3D" id="3.90.800.10">
    <property type="entry name" value="Glutamyl-tRNA Synthetase, Domain 3"/>
    <property type="match status" value="1"/>
</dbReference>
<dbReference type="Gene3D" id="3.40.50.620">
    <property type="entry name" value="HUPs"/>
    <property type="match status" value="1"/>
</dbReference>
<dbReference type="Gene3D" id="2.40.240.10">
    <property type="entry name" value="Ribosomal Protein L25, Chain P"/>
    <property type="match status" value="2"/>
</dbReference>
<dbReference type="HAMAP" id="MF_00126">
    <property type="entry name" value="Gln_tRNA_synth"/>
    <property type="match status" value="1"/>
</dbReference>
<dbReference type="InterPro" id="IPR001412">
    <property type="entry name" value="aa-tRNA-synth_I_CS"/>
</dbReference>
<dbReference type="InterPro" id="IPR004514">
    <property type="entry name" value="Gln-tRNA-synth"/>
</dbReference>
<dbReference type="InterPro" id="IPR050132">
    <property type="entry name" value="Gln/Glu-tRNA_Ligase"/>
</dbReference>
<dbReference type="InterPro" id="IPR022861">
    <property type="entry name" value="Gln_tRNA_ligase_bac"/>
</dbReference>
<dbReference type="InterPro" id="IPR000924">
    <property type="entry name" value="Glu/Gln-tRNA-synth"/>
</dbReference>
<dbReference type="InterPro" id="IPR020058">
    <property type="entry name" value="Glu/Gln-tRNA-synth_Ib_cat-dom"/>
</dbReference>
<dbReference type="InterPro" id="IPR020059">
    <property type="entry name" value="Glu/Gln-tRNA-synth_Ib_codon-bd"/>
</dbReference>
<dbReference type="InterPro" id="IPR020061">
    <property type="entry name" value="Glu_tRNA_lig_a-bdl"/>
</dbReference>
<dbReference type="InterPro" id="IPR020056">
    <property type="entry name" value="Rbsml_bL25/Gln-tRNA_synth_N"/>
</dbReference>
<dbReference type="InterPro" id="IPR011035">
    <property type="entry name" value="Ribosomal_bL25/Gln-tRNA_synth"/>
</dbReference>
<dbReference type="InterPro" id="IPR014729">
    <property type="entry name" value="Rossmann-like_a/b/a_fold"/>
</dbReference>
<dbReference type="InterPro" id="IPR049437">
    <property type="entry name" value="tRNA-synt_1c_C2"/>
</dbReference>
<dbReference type="NCBIfam" id="TIGR00440">
    <property type="entry name" value="glnS"/>
    <property type="match status" value="1"/>
</dbReference>
<dbReference type="NCBIfam" id="NF011291">
    <property type="entry name" value="PRK14703.1"/>
    <property type="match status" value="1"/>
</dbReference>
<dbReference type="PANTHER" id="PTHR43097:SF5">
    <property type="entry name" value="GLUTAMATE--TRNA LIGASE"/>
    <property type="match status" value="1"/>
</dbReference>
<dbReference type="PANTHER" id="PTHR43097">
    <property type="entry name" value="GLUTAMINE-TRNA LIGASE"/>
    <property type="match status" value="1"/>
</dbReference>
<dbReference type="Pfam" id="PF00749">
    <property type="entry name" value="tRNA-synt_1c"/>
    <property type="match status" value="1"/>
</dbReference>
<dbReference type="Pfam" id="PF03950">
    <property type="entry name" value="tRNA-synt_1c_C"/>
    <property type="match status" value="1"/>
</dbReference>
<dbReference type="Pfam" id="PF20974">
    <property type="entry name" value="tRNA-synt_1c_C2"/>
    <property type="match status" value="1"/>
</dbReference>
<dbReference type="PRINTS" id="PR00987">
    <property type="entry name" value="TRNASYNTHGLU"/>
</dbReference>
<dbReference type="SUPFAM" id="SSF52374">
    <property type="entry name" value="Nucleotidylyl transferase"/>
    <property type="match status" value="1"/>
</dbReference>
<dbReference type="SUPFAM" id="SSF50715">
    <property type="entry name" value="Ribosomal protein L25-like"/>
    <property type="match status" value="1"/>
</dbReference>
<dbReference type="PROSITE" id="PS00178">
    <property type="entry name" value="AA_TRNA_LIGASE_I"/>
    <property type="match status" value="1"/>
</dbReference>
<accession>Q8ZDD9</accession>
<accession>Q0WDQ2</accession>
<organism>
    <name type="scientific">Yersinia pestis</name>
    <dbReference type="NCBI Taxonomy" id="632"/>
    <lineage>
        <taxon>Bacteria</taxon>
        <taxon>Pseudomonadati</taxon>
        <taxon>Pseudomonadota</taxon>
        <taxon>Gammaproteobacteria</taxon>
        <taxon>Enterobacterales</taxon>
        <taxon>Yersiniaceae</taxon>
        <taxon>Yersinia</taxon>
    </lineage>
</organism>
<protein>
    <recommendedName>
        <fullName evidence="1">Glutamine--tRNA ligase</fullName>
        <ecNumber evidence="1">6.1.1.18</ecNumber>
    </recommendedName>
    <alternativeName>
        <fullName evidence="1">Glutaminyl-tRNA synthetase</fullName>
        <shortName evidence="1">GlnRS</shortName>
    </alternativeName>
</protein>
<reference key="1">
    <citation type="journal article" date="2001" name="Nature">
        <title>Genome sequence of Yersinia pestis, the causative agent of plague.</title>
        <authorList>
            <person name="Parkhill J."/>
            <person name="Wren B.W."/>
            <person name="Thomson N.R."/>
            <person name="Titball R.W."/>
            <person name="Holden M.T.G."/>
            <person name="Prentice M.B."/>
            <person name="Sebaihia M."/>
            <person name="James K.D."/>
            <person name="Churcher C.M."/>
            <person name="Mungall K.L."/>
            <person name="Baker S."/>
            <person name="Basham D."/>
            <person name="Bentley S.D."/>
            <person name="Brooks K."/>
            <person name="Cerdeno-Tarraga A.-M."/>
            <person name="Chillingworth T."/>
            <person name="Cronin A."/>
            <person name="Davies R.M."/>
            <person name="Davis P."/>
            <person name="Dougan G."/>
            <person name="Feltwell T."/>
            <person name="Hamlin N."/>
            <person name="Holroyd S."/>
            <person name="Jagels K."/>
            <person name="Karlyshev A.V."/>
            <person name="Leather S."/>
            <person name="Moule S."/>
            <person name="Oyston P.C.F."/>
            <person name="Quail M.A."/>
            <person name="Rutherford K.M."/>
            <person name="Simmonds M."/>
            <person name="Skelton J."/>
            <person name="Stevens K."/>
            <person name="Whitehead S."/>
            <person name="Barrell B.G."/>
        </authorList>
    </citation>
    <scope>NUCLEOTIDE SEQUENCE [LARGE SCALE GENOMIC DNA]</scope>
    <source>
        <strain>CO-92 / Biovar Orientalis</strain>
    </source>
</reference>
<reference key="2">
    <citation type="journal article" date="2002" name="J. Bacteriol.">
        <title>Genome sequence of Yersinia pestis KIM.</title>
        <authorList>
            <person name="Deng W."/>
            <person name="Burland V."/>
            <person name="Plunkett G. III"/>
            <person name="Boutin A."/>
            <person name="Mayhew G.F."/>
            <person name="Liss P."/>
            <person name="Perna N.T."/>
            <person name="Rose D.J."/>
            <person name="Mau B."/>
            <person name="Zhou S."/>
            <person name="Schwartz D.C."/>
            <person name="Fetherston J.D."/>
            <person name="Lindler L.E."/>
            <person name="Brubaker R.R."/>
            <person name="Plano G.V."/>
            <person name="Straley S.C."/>
            <person name="McDonough K.A."/>
            <person name="Nilles M.L."/>
            <person name="Matson J.S."/>
            <person name="Blattner F.R."/>
            <person name="Perry R.D."/>
        </authorList>
    </citation>
    <scope>NUCLEOTIDE SEQUENCE [LARGE SCALE GENOMIC DNA]</scope>
    <source>
        <strain>KIM10+ / Biovar Mediaevalis</strain>
    </source>
</reference>
<reference key="3">
    <citation type="journal article" date="2004" name="DNA Res.">
        <title>Complete genome sequence of Yersinia pestis strain 91001, an isolate avirulent to humans.</title>
        <authorList>
            <person name="Song Y."/>
            <person name="Tong Z."/>
            <person name="Wang J."/>
            <person name="Wang L."/>
            <person name="Guo Z."/>
            <person name="Han Y."/>
            <person name="Zhang J."/>
            <person name="Pei D."/>
            <person name="Zhou D."/>
            <person name="Qin H."/>
            <person name="Pang X."/>
            <person name="Han Y."/>
            <person name="Zhai J."/>
            <person name="Li M."/>
            <person name="Cui B."/>
            <person name="Qi Z."/>
            <person name="Jin L."/>
            <person name="Dai R."/>
            <person name="Chen F."/>
            <person name="Li S."/>
            <person name="Ye C."/>
            <person name="Du Z."/>
            <person name="Lin W."/>
            <person name="Wang J."/>
            <person name="Yu J."/>
            <person name="Yang H."/>
            <person name="Wang J."/>
            <person name="Huang P."/>
            <person name="Yang R."/>
        </authorList>
    </citation>
    <scope>NUCLEOTIDE SEQUENCE [LARGE SCALE GENOMIC DNA]</scope>
    <source>
        <strain>91001 / Biovar Mediaevalis</strain>
    </source>
</reference>
<name>SYQ_YERPE</name>
<evidence type="ECO:0000255" key="1">
    <source>
        <dbReference type="HAMAP-Rule" id="MF_00126"/>
    </source>
</evidence>
<evidence type="ECO:0000305" key="2"/>
<comment type="catalytic activity">
    <reaction evidence="1">
        <text>tRNA(Gln) + L-glutamine + ATP = L-glutaminyl-tRNA(Gln) + AMP + diphosphate</text>
        <dbReference type="Rhea" id="RHEA:20121"/>
        <dbReference type="Rhea" id="RHEA-COMP:9662"/>
        <dbReference type="Rhea" id="RHEA-COMP:9681"/>
        <dbReference type="ChEBI" id="CHEBI:30616"/>
        <dbReference type="ChEBI" id="CHEBI:33019"/>
        <dbReference type="ChEBI" id="CHEBI:58359"/>
        <dbReference type="ChEBI" id="CHEBI:78442"/>
        <dbReference type="ChEBI" id="CHEBI:78521"/>
        <dbReference type="ChEBI" id="CHEBI:456215"/>
        <dbReference type="EC" id="6.1.1.18"/>
    </reaction>
</comment>
<comment type="subunit">
    <text evidence="1">Monomer.</text>
</comment>
<comment type="subcellular location">
    <subcellularLocation>
        <location evidence="1">Cytoplasm</location>
    </subcellularLocation>
</comment>
<comment type="similarity">
    <text evidence="1">Belongs to the class-I aminoacyl-tRNA synthetase family.</text>
</comment>
<comment type="sequence caution" evidence="2">
    <conflict type="erroneous initiation">
        <sequence resource="EMBL-CDS" id="AAM84782"/>
    </conflict>
</comment>
<comment type="sequence caution" evidence="2">
    <conflict type="erroneous initiation">
        <sequence resource="EMBL-CDS" id="AAS61331"/>
    </conflict>
</comment>
<feature type="chain" id="PRO_0000195859" description="Glutamine--tRNA ligase">
    <location>
        <begin position="1"/>
        <end position="555"/>
    </location>
</feature>
<feature type="short sequence motif" description="'HIGH' region" evidence="1">
    <location>
        <begin position="34"/>
        <end position="44"/>
    </location>
</feature>
<feature type="short sequence motif" description="'KMSKS' region" evidence="1">
    <location>
        <begin position="268"/>
        <end position="272"/>
    </location>
</feature>
<feature type="binding site" evidence="1">
    <location>
        <begin position="35"/>
        <end position="37"/>
    </location>
    <ligand>
        <name>ATP</name>
        <dbReference type="ChEBI" id="CHEBI:30616"/>
    </ligand>
</feature>
<feature type="binding site" evidence="1">
    <location>
        <begin position="41"/>
        <end position="47"/>
    </location>
    <ligand>
        <name>ATP</name>
        <dbReference type="ChEBI" id="CHEBI:30616"/>
    </ligand>
</feature>
<feature type="binding site" evidence="1">
    <location>
        <position position="67"/>
    </location>
    <ligand>
        <name>L-glutamine</name>
        <dbReference type="ChEBI" id="CHEBI:58359"/>
    </ligand>
</feature>
<feature type="binding site" evidence="1">
    <location>
        <position position="212"/>
    </location>
    <ligand>
        <name>L-glutamine</name>
        <dbReference type="ChEBI" id="CHEBI:58359"/>
    </ligand>
</feature>
<feature type="binding site" evidence="1">
    <location>
        <position position="231"/>
    </location>
    <ligand>
        <name>ATP</name>
        <dbReference type="ChEBI" id="CHEBI:30616"/>
    </ligand>
</feature>
<feature type="binding site" evidence="1">
    <location>
        <begin position="261"/>
        <end position="262"/>
    </location>
    <ligand>
        <name>ATP</name>
        <dbReference type="ChEBI" id="CHEBI:30616"/>
    </ligand>
</feature>
<feature type="binding site" evidence="1">
    <location>
        <begin position="269"/>
        <end position="271"/>
    </location>
    <ligand>
        <name>ATP</name>
        <dbReference type="ChEBI" id="CHEBI:30616"/>
    </ligand>
</feature>